<gene>
    <name evidence="14" type="primary">Ehf</name>
</gene>
<reference evidence="10 11" key="1">
    <citation type="journal article" date="1998" name="Biochem. Biophys. Res. Commun.">
        <title>Molecular cloning and expression of Ehf, a new member of the ets transcription factor/oncoprotein gene family.</title>
        <authorList>
            <person name="Bochert M.A."/>
            <person name="Kleinbaum L.A."/>
            <person name="Sun L.-Y."/>
            <person name="Burton F.H."/>
        </authorList>
    </citation>
    <scope>NUCLEOTIDE SEQUENCE [MRNA] (ISOFORM 1)</scope>
    <scope>TISSUE SPECIFICITY</scope>
    <source>
        <tissue evidence="11">Pituitary</tissue>
    </source>
</reference>
<reference evidence="10 12" key="2">
    <citation type="journal article" date="2004" name="Genome Res.">
        <title>The status, quality, and expansion of the NIH full-length cDNA project: the Mammalian Gene Collection (MGC).</title>
        <authorList>
            <consortium name="The MGC Project Team"/>
        </authorList>
    </citation>
    <scope>NUCLEOTIDE SEQUENCE [LARGE SCALE MRNA] (ISOFORMS 2 AND 3)</scope>
    <scope>NUCLEOTIDE SEQUENCE [LARGE SCALE MRNA] OF 222-300 (ISOFORMS 1/2)</scope>
    <source>
        <strain evidence="12">Czech II</strain>
        <strain evidence="13">FVB/N</strain>
        <tissue evidence="12">Mammary gland</tissue>
    </source>
</reference>
<reference evidence="10" key="3">
    <citation type="journal article" date="2006" name="Biochem. J.">
        <title>Determination of the consensus DNA-binding sequence and a transcriptional activation domain for ESE-2.</title>
        <authorList>
            <person name="Choi Y.S."/>
            <person name="Sinha S."/>
        </authorList>
    </citation>
    <scope>DOMAIN</scope>
</reference>
<evidence type="ECO:0000250" key="1">
    <source>
        <dbReference type="UniProtKB" id="Q9NZC4"/>
    </source>
</evidence>
<evidence type="ECO:0000255" key="2"/>
<evidence type="ECO:0000255" key="3">
    <source>
        <dbReference type="PROSITE-ProRule" id="PRU00237"/>
    </source>
</evidence>
<evidence type="ECO:0000255" key="4">
    <source>
        <dbReference type="PROSITE-ProRule" id="PRU00762"/>
    </source>
</evidence>
<evidence type="ECO:0000256" key="5">
    <source>
        <dbReference type="SAM" id="MobiDB-lite"/>
    </source>
</evidence>
<evidence type="ECO:0000269" key="6">
    <source>
    </source>
</evidence>
<evidence type="ECO:0000269" key="7">
    <source>
    </source>
</evidence>
<evidence type="ECO:0000269" key="8">
    <source>
    </source>
</evidence>
<evidence type="ECO:0000303" key="9">
    <source>
    </source>
</evidence>
<evidence type="ECO:0000305" key="10"/>
<evidence type="ECO:0000312" key="11">
    <source>
        <dbReference type="EMBL" id="AAC40119.1"/>
    </source>
</evidence>
<evidence type="ECO:0000312" key="12">
    <source>
        <dbReference type="EMBL" id="AAH05520.1"/>
    </source>
</evidence>
<evidence type="ECO:0000312" key="13">
    <source>
        <dbReference type="EMBL" id="AAH08249.1"/>
    </source>
</evidence>
<evidence type="ECO:0000312" key="14">
    <source>
        <dbReference type="MGI" id="MGI:1270840"/>
    </source>
</evidence>
<accession>O70273</accession>
<accession>Q922E8</accession>
<accession>Q922T6</accession>
<accession>Q99K12</accession>
<protein>
    <recommendedName>
        <fullName>ETS homologous factor</fullName>
    </recommendedName>
    <alternativeName>
        <fullName>ETS domain-containing transcription factor</fullName>
    </alternativeName>
</protein>
<feature type="chain" id="PRO_0000257970" description="ETS homologous factor">
    <location>
        <begin position="1"/>
        <end position="300"/>
    </location>
</feature>
<feature type="domain" description="PNT" evidence="4">
    <location>
        <begin position="29"/>
        <end position="115"/>
    </location>
</feature>
<feature type="DNA-binding region" description="ETS" evidence="3">
    <location>
        <begin position="207"/>
        <end position="289"/>
    </location>
</feature>
<feature type="region of interest" description="Disordered" evidence="5">
    <location>
        <begin position="181"/>
        <end position="203"/>
    </location>
</feature>
<feature type="compositionally biased region" description="Basic and acidic residues" evidence="5">
    <location>
        <begin position="185"/>
        <end position="195"/>
    </location>
</feature>
<feature type="splice variant" id="VSP_052191" description="In isoform 2." evidence="9">
    <location>
        <begin position="79"/>
        <end position="93"/>
    </location>
</feature>
<feature type="splice variant" id="VSP_052192" description="In isoform 3." evidence="9">
    <original>KKHNPRGTHLWE</original>
    <variation>YFIIELLLSESR</variation>
    <location>
        <begin position="200"/>
        <end position="211"/>
    </location>
</feature>
<feature type="splice variant" id="VSP_052193" description="In isoform 3." evidence="9">
    <location>
        <begin position="212"/>
        <end position="300"/>
    </location>
</feature>
<name>EHF_MOUSE</name>
<keyword id="KW-0025">Alternative splicing</keyword>
<keyword id="KW-0238">DNA-binding</keyword>
<keyword id="KW-0539">Nucleus</keyword>
<keyword id="KW-1185">Reference proteome</keyword>
<keyword id="KW-0804">Transcription</keyword>
<keyword id="KW-0805">Transcription regulation</keyword>
<organism>
    <name type="scientific">Mus musculus</name>
    <name type="common">Mouse</name>
    <dbReference type="NCBI Taxonomy" id="10090"/>
    <lineage>
        <taxon>Eukaryota</taxon>
        <taxon>Metazoa</taxon>
        <taxon>Chordata</taxon>
        <taxon>Craniata</taxon>
        <taxon>Vertebrata</taxon>
        <taxon>Euteleostomi</taxon>
        <taxon>Mammalia</taxon>
        <taxon>Eutheria</taxon>
        <taxon>Euarchontoglires</taxon>
        <taxon>Glires</taxon>
        <taxon>Rodentia</taxon>
        <taxon>Myomorpha</taxon>
        <taxon>Muroidea</taxon>
        <taxon>Muridae</taxon>
        <taxon>Murinae</taxon>
        <taxon>Mus</taxon>
        <taxon>Mus</taxon>
    </lineage>
</organism>
<proteinExistence type="evidence at transcript level"/>
<comment type="function">
    <text evidence="1 7">Transcriptional activator that may play a role in regulating epithelial cell differentiation and proliferation. May act as a repressor for a specific subset of ETS/AP-1-responsive genes, and as a modulator of the nuclear response to mitogen-activated protein kinase signaling cascades. Binds to DNA sequences containing the consensus nucleotide core sequence GGAA. Involved in regulation of TNFRSF10B/DR5 expression through Ets-binding sequences on the TNFRSF10B/DR5 promoter (By similarity).</text>
</comment>
<comment type="subcellular location">
    <subcellularLocation>
        <location evidence="1 3">Nucleus</location>
    </subcellularLocation>
</comment>
<comment type="alternative products">
    <event type="alternative splicing"/>
    <isoform>
        <id>O70273-1</id>
        <name evidence="8">1</name>
        <sequence type="displayed"/>
    </isoform>
    <isoform>
        <id>O70273-2</id>
        <name evidence="6">2</name>
        <sequence type="described" ref="VSP_052191"/>
    </isoform>
    <isoform>
        <id>O70273-3</id>
        <name evidence="6">3</name>
        <sequence type="described" ref="VSP_052192 VSP_052193"/>
    </isoform>
</comment>
<comment type="tissue specificity">
    <text evidence="8">Highly expressed in kidney and lung, weakly in skeletal muscle, heart, and liver, and not detected in brain, spleen or testis.</text>
</comment>
<comment type="domain">
    <text evidence="7">The PNT domain acts as a transcriptional activator.</text>
</comment>
<comment type="similarity">
    <text evidence="2">Belongs to the ETS family.</text>
</comment>
<dbReference type="EMBL" id="AF035527">
    <property type="protein sequence ID" value="AAC40119.1"/>
    <property type="molecule type" value="mRNA"/>
</dbReference>
<dbReference type="EMBL" id="BC005520">
    <property type="protein sequence ID" value="AAH05520.1"/>
    <property type="molecule type" value="mRNA"/>
</dbReference>
<dbReference type="EMBL" id="BC006789">
    <property type="protein sequence ID" value="AAH06789.1"/>
    <property type="molecule type" value="mRNA"/>
</dbReference>
<dbReference type="EMBL" id="BC008249">
    <property type="protein sequence ID" value="AAH08249.1"/>
    <property type="molecule type" value="mRNA"/>
</dbReference>
<dbReference type="CCDS" id="CCDS16475.1">
    <molecule id="O70273-1"/>
</dbReference>
<dbReference type="PIR" id="JW0048">
    <property type="entry name" value="JW0048"/>
</dbReference>
<dbReference type="RefSeq" id="NP_031940.1">
    <molecule id="O70273-1"/>
    <property type="nucleotide sequence ID" value="NM_007914.3"/>
</dbReference>
<dbReference type="RefSeq" id="XP_006498760.1">
    <molecule id="O70273-1"/>
    <property type="nucleotide sequence ID" value="XM_006498697.3"/>
</dbReference>
<dbReference type="RefSeq" id="XP_006498761.1">
    <molecule id="O70273-1"/>
    <property type="nucleotide sequence ID" value="XM_006498698.4"/>
</dbReference>
<dbReference type="RefSeq" id="XP_006498762.1">
    <molecule id="O70273-1"/>
    <property type="nucleotide sequence ID" value="XM_006498699.1"/>
</dbReference>
<dbReference type="RefSeq" id="XP_006498763.1">
    <molecule id="O70273-1"/>
    <property type="nucleotide sequence ID" value="XM_006498700.4"/>
</dbReference>
<dbReference type="RefSeq" id="XP_006498764.1">
    <molecule id="O70273-1"/>
    <property type="nucleotide sequence ID" value="XM_006498701.4"/>
</dbReference>
<dbReference type="RefSeq" id="XP_006498765.1">
    <molecule id="O70273-1"/>
    <property type="nucleotide sequence ID" value="XM_006498702.4"/>
</dbReference>
<dbReference type="SMR" id="O70273"/>
<dbReference type="BioGRID" id="199409">
    <property type="interactions" value="2"/>
</dbReference>
<dbReference type="FunCoup" id="O70273">
    <property type="interactions" value="2096"/>
</dbReference>
<dbReference type="IntAct" id="O70273">
    <property type="interactions" value="1"/>
</dbReference>
<dbReference type="STRING" id="10090.ENSMUSP00000087961"/>
<dbReference type="PhosphoSitePlus" id="O70273"/>
<dbReference type="PaxDb" id="10090-ENSMUSP00000087961"/>
<dbReference type="PeptideAtlas" id="O70273"/>
<dbReference type="ProteomicsDB" id="277567">
    <molecule id="O70273-1"/>
</dbReference>
<dbReference type="ProteomicsDB" id="277568">
    <molecule id="O70273-2"/>
</dbReference>
<dbReference type="ProteomicsDB" id="277569">
    <molecule id="O70273-3"/>
</dbReference>
<dbReference type="Antibodypedia" id="13027">
    <property type="antibodies" value="136 antibodies from 22 providers"/>
</dbReference>
<dbReference type="DNASU" id="13661"/>
<dbReference type="Ensembl" id="ENSMUST00000090475.10">
    <molecule id="O70273-1"/>
    <property type="protein sequence ID" value="ENSMUSP00000087961.4"/>
    <property type="gene ID" value="ENSMUSG00000012350.16"/>
</dbReference>
<dbReference type="Ensembl" id="ENSMUST00000111174.8">
    <molecule id="O70273-1"/>
    <property type="protein sequence ID" value="ENSMUSP00000106805.2"/>
    <property type="gene ID" value="ENSMUSG00000012350.16"/>
</dbReference>
<dbReference type="GeneID" id="13661"/>
<dbReference type="KEGG" id="mmu:13661"/>
<dbReference type="UCSC" id="uc008lio.1">
    <molecule id="O70273-1"/>
    <property type="organism name" value="mouse"/>
</dbReference>
<dbReference type="AGR" id="MGI:1270840"/>
<dbReference type="CTD" id="26298"/>
<dbReference type="MGI" id="MGI:1270840">
    <property type="gene designation" value="Ehf"/>
</dbReference>
<dbReference type="VEuPathDB" id="HostDB:ENSMUSG00000012350"/>
<dbReference type="eggNOG" id="KOG3804">
    <property type="taxonomic scope" value="Eukaryota"/>
</dbReference>
<dbReference type="GeneTree" id="ENSGT00940000159310"/>
<dbReference type="InParanoid" id="O70273"/>
<dbReference type="OMA" id="MMDSKTF"/>
<dbReference type="OrthoDB" id="5961210at2759"/>
<dbReference type="PhylomeDB" id="O70273"/>
<dbReference type="TreeFam" id="TF318679"/>
<dbReference type="BioGRID-ORCS" id="13661">
    <property type="hits" value="1 hit in 76 CRISPR screens"/>
</dbReference>
<dbReference type="ChiTaRS" id="Ehf">
    <property type="organism name" value="mouse"/>
</dbReference>
<dbReference type="PRO" id="PR:O70273"/>
<dbReference type="Proteomes" id="UP000000589">
    <property type="component" value="Chromosome 2"/>
</dbReference>
<dbReference type="RNAct" id="O70273">
    <property type="molecule type" value="protein"/>
</dbReference>
<dbReference type="Bgee" id="ENSMUSG00000012350">
    <property type="expression patterns" value="Expressed in lacrimal gland and 143 other cell types or tissues"/>
</dbReference>
<dbReference type="ExpressionAtlas" id="O70273">
    <property type="expression patterns" value="baseline and differential"/>
</dbReference>
<dbReference type="GO" id="GO:0005794">
    <property type="term" value="C:Golgi apparatus"/>
    <property type="evidence" value="ECO:0007669"/>
    <property type="project" value="Ensembl"/>
</dbReference>
<dbReference type="GO" id="GO:0005654">
    <property type="term" value="C:nucleoplasm"/>
    <property type="evidence" value="ECO:0007669"/>
    <property type="project" value="Ensembl"/>
</dbReference>
<dbReference type="GO" id="GO:0003677">
    <property type="term" value="F:DNA binding"/>
    <property type="evidence" value="ECO:0000250"/>
    <property type="project" value="UniProtKB"/>
</dbReference>
<dbReference type="GO" id="GO:0001228">
    <property type="term" value="F:DNA-binding transcription activator activity, RNA polymerase II-specific"/>
    <property type="evidence" value="ECO:0000250"/>
    <property type="project" value="UniProtKB"/>
</dbReference>
<dbReference type="GO" id="GO:0000978">
    <property type="term" value="F:RNA polymerase II cis-regulatory region sequence-specific DNA binding"/>
    <property type="evidence" value="ECO:0007669"/>
    <property type="project" value="Ensembl"/>
</dbReference>
<dbReference type="GO" id="GO:0030855">
    <property type="term" value="P:epithelial cell differentiation"/>
    <property type="evidence" value="ECO:0000250"/>
    <property type="project" value="UniProtKB"/>
</dbReference>
<dbReference type="GO" id="GO:0045944">
    <property type="term" value="P:positive regulation of transcription by RNA polymerase II"/>
    <property type="evidence" value="ECO:0000250"/>
    <property type="project" value="UniProtKB"/>
</dbReference>
<dbReference type="CDD" id="cd08539">
    <property type="entry name" value="SAM_PNT-ESE-3-like"/>
    <property type="match status" value="1"/>
</dbReference>
<dbReference type="FunFam" id="1.10.10.10:FF:000136">
    <property type="entry name" value="ETS homologous factor isoform X1"/>
    <property type="match status" value="1"/>
</dbReference>
<dbReference type="FunFam" id="1.10.150.50:FF:000026">
    <property type="entry name" value="ETS homologous factor isoform X1"/>
    <property type="match status" value="1"/>
</dbReference>
<dbReference type="Gene3D" id="1.10.150.50">
    <property type="entry name" value="Transcription Factor, Ets-1"/>
    <property type="match status" value="1"/>
</dbReference>
<dbReference type="Gene3D" id="1.10.10.10">
    <property type="entry name" value="Winged helix-like DNA-binding domain superfamily/Winged helix DNA-binding domain"/>
    <property type="match status" value="1"/>
</dbReference>
<dbReference type="InterPro" id="IPR033071">
    <property type="entry name" value="EHF_SAM_Pointed_dom"/>
</dbReference>
<dbReference type="InterPro" id="IPR000418">
    <property type="entry name" value="Ets_dom"/>
</dbReference>
<dbReference type="InterPro" id="IPR046328">
    <property type="entry name" value="ETS_fam"/>
</dbReference>
<dbReference type="InterPro" id="IPR003118">
    <property type="entry name" value="Pointed_dom"/>
</dbReference>
<dbReference type="InterPro" id="IPR013761">
    <property type="entry name" value="SAM/pointed_sf"/>
</dbReference>
<dbReference type="InterPro" id="IPR036388">
    <property type="entry name" value="WH-like_DNA-bd_sf"/>
</dbReference>
<dbReference type="InterPro" id="IPR036390">
    <property type="entry name" value="WH_DNA-bd_sf"/>
</dbReference>
<dbReference type="PANTHER" id="PTHR11849">
    <property type="entry name" value="ETS"/>
    <property type="match status" value="1"/>
</dbReference>
<dbReference type="PANTHER" id="PTHR11849:SF171">
    <property type="entry name" value="ETS HOMOLOGOUS FACTOR"/>
    <property type="match status" value="1"/>
</dbReference>
<dbReference type="Pfam" id="PF00178">
    <property type="entry name" value="Ets"/>
    <property type="match status" value="1"/>
</dbReference>
<dbReference type="Pfam" id="PF02198">
    <property type="entry name" value="SAM_PNT"/>
    <property type="match status" value="1"/>
</dbReference>
<dbReference type="PRINTS" id="PR00454">
    <property type="entry name" value="ETSDOMAIN"/>
</dbReference>
<dbReference type="SMART" id="SM00413">
    <property type="entry name" value="ETS"/>
    <property type="match status" value="1"/>
</dbReference>
<dbReference type="SMART" id="SM00251">
    <property type="entry name" value="SAM_PNT"/>
    <property type="match status" value="1"/>
</dbReference>
<dbReference type="SUPFAM" id="SSF47769">
    <property type="entry name" value="SAM/Pointed domain"/>
    <property type="match status" value="1"/>
</dbReference>
<dbReference type="SUPFAM" id="SSF46785">
    <property type="entry name" value="Winged helix' DNA-binding domain"/>
    <property type="match status" value="1"/>
</dbReference>
<dbReference type="PROSITE" id="PS50061">
    <property type="entry name" value="ETS_DOMAIN_3"/>
    <property type="match status" value="1"/>
</dbReference>
<dbReference type="PROSITE" id="PS51433">
    <property type="entry name" value="PNT"/>
    <property type="match status" value="1"/>
</dbReference>
<sequence>MILEGSGVMNLNPANNLLHQQPAWTDSYPTCNVSSGFFGSQWHEIHPQYWTKYQVWEWLQHLLDTNQLDASCIPFQEFDISGEHLCSMSLQEFTRAAGSAGQLLYSNLQHLKWNGQCSSDLFQSAHNVIVKTEQTDPSIMNTWKEENYLYDPSYGSTVDLLDSKTFCRAQISMTTSSHLPVAESPDMKKEQDHPVKSHTKKHNPRGTHLWEFIRDILLSPDKNPGLIKWEDRSEGIFRFLKSEAVAQLWGKKKNNSSMTYEKLSRAMRYYYKREILERVDGRRLVYKFGKNARGWRENEN</sequence>